<organism>
    <name type="scientific">Rattus norvegicus</name>
    <name type="common">Rat</name>
    <dbReference type="NCBI Taxonomy" id="10116"/>
    <lineage>
        <taxon>Eukaryota</taxon>
        <taxon>Metazoa</taxon>
        <taxon>Chordata</taxon>
        <taxon>Craniata</taxon>
        <taxon>Vertebrata</taxon>
        <taxon>Euteleostomi</taxon>
        <taxon>Mammalia</taxon>
        <taxon>Eutheria</taxon>
        <taxon>Euarchontoglires</taxon>
        <taxon>Glires</taxon>
        <taxon>Rodentia</taxon>
        <taxon>Myomorpha</taxon>
        <taxon>Muroidea</taxon>
        <taxon>Muridae</taxon>
        <taxon>Murinae</taxon>
        <taxon>Rattus</taxon>
    </lineage>
</organism>
<evidence type="ECO:0000250" key="1"/>
<evidence type="ECO:0000255" key="2"/>
<evidence type="ECO:0000269" key="3">
    <source>
    </source>
</evidence>
<evidence type="ECO:0000305" key="4"/>
<feature type="signal peptide" evidence="2">
    <location>
        <begin position="1"/>
        <end position="26"/>
    </location>
</feature>
<feature type="chain" id="PRO_0000402834" description="Protein RoBo-1">
    <location>
        <begin position="27"/>
        <end position="240"/>
    </location>
</feature>
<feature type="glycosylation site" description="N-linked (GlcNAc...) asparagine" evidence="2">
    <location>
        <position position="42"/>
    </location>
</feature>
<feature type="glycosylation site" description="N-linked (GlcNAc...) asparagine" evidence="2">
    <location>
        <position position="153"/>
    </location>
</feature>
<feature type="disulfide bond" evidence="1">
    <location>
        <begin position="47"/>
        <end position="76"/>
    </location>
</feature>
<feature type="disulfide bond" evidence="1">
    <location>
        <begin position="81"/>
        <end position="102"/>
    </location>
</feature>
<feature type="disulfide bond" evidence="1">
    <location>
        <begin position="103"/>
        <end position="108"/>
    </location>
</feature>
<feature type="disulfide bond" evidence="1">
    <location>
        <begin position="127"/>
        <end position="151"/>
    </location>
</feature>
<feature type="disulfide bond" evidence="1">
    <location>
        <begin position="144"/>
        <end position="171"/>
    </location>
</feature>
<proteinExistence type="evidence at protein level"/>
<keyword id="KW-1015">Disulfide bond</keyword>
<keyword id="KW-0325">Glycoprotein</keyword>
<keyword id="KW-1185">Reference proteome</keyword>
<keyword id="KW-0964">Secreted</keyword>
<keyword id="KW-0732">Signal</keyword>
<reference key="1">
    <citation type="journal article" date="1998" name="J. Biol. Chem.">
        <title>RoBo-1, a novel member of the urokinase plasminogen activator receptor/CD59/Ly-6/snake toxin family selectively expressed in rat bone and growth plate cartilage.</title>
        <authorList>
            <person name="Noel L.S."/>
            <person name="Champion B.R."/>
            <person name="Holley C.L."/>
            <person name="Simmons C.J."/>
            <person name="Morris D.C."/>
            <person name="Payne J.A."/>
            <person name="Lean J.M."/>
            <person name="Chambers T.J."/>
            <person name="Zaman G."/>
            <person name="Lanyon L.E."/>
            <person name="Suva L.J."/>
            <person name="Miller L.R."/>
        </authorList>
    </citation>
    <scope>NUCLEOTIDE SEQUENCE [MRNA]</scope>
    <scope>FUNCTION</scope>
    <scope>INDUCTION</scope>
    <scope>TISSUE SPECIFICITY</scope>
    <scope>GLYCOSYLATION</scope>
    <source>
        <strain>CD Charles River</strain>
        <tissue>Tibial bone</tissue>
    </source>
</reference>
<reference key="2">
    <citation type="submission" date="2005-07" db="EMBL/GenBank/DDBJ databases">
        <authorList>
            <person name="Mural R.J."/>
            <person name="Adams M.D."/>
            <person name="Myers E.W."/>
            <person name="Smith H.O."/>
            <person name="Venter J.C."/>
        </authorList>
    </citation>
    <scope>NUCLEOTIDE SEQUENCE [LARGE SCALE GENOMIC DNA]</scope>
    <source>
        <strain>Brown Norway</strain>
    </source>
</reference>
<protein>
    <recommendedName>
        <fullName>Protein RoBo-1</fullName>
    </recommendedName>
    <alternativeName>
        <fullName>Rodent bone protein</fullName>
    </alternativeName>
</protein>
<comment type="function">
    <text evidence="3">May play a novel role in the growth or remodeling of bone.</text>
</comment>
<comment type="subcellular location">
    <subcellularLocation>
        <location evidence="4">Secreted</location>
    </subcellularLocation>
</comment>
<comment type="tissue specificity">
    <text evidence="3">Expressed abundantly in bone, including the lengthening growth plate where cartilage is remodeled into bone.</text>
</comment>
<comment type="induction">
    <text evidence="3">Up-regulated by estradiol.</text>
</comment>
<comment type="PTM">
    <text evidence="3">N-glycosylated.</text>
</comment>
<comment type="similarity">
    <text evidence="4">Belongs to the CNF-like-inhibitor family.</text>
</comment>
<dbReference type="EMBL" id="AF041083">
    <property type="protein sequence ID" value="AAC40033.1"/>
    <property type="molecule type" value="mRNA"/>
</dbReference>
<dbReference type="EMBL" id="CH473948">
    <property type="protein sequence ID" value="EDM04544.1"/>
    <property type="molecule type" value="Genomic_DNA"/>
</dbReference>
<dbReference type="RefSeq" id="NP_113725.1">
    <property type="nucleotide sequence ID" value="NM_031537.2"/>
</dbReference>
<dbReference type="RefSeq" id="XP_006246439.2">
    <property type="nucleotide sequence ID" value="XM_006246377.4"/>
</dbReference>
<dbReference type="SMR" id="O55006"/>
<dbReference type="STRING" id="10116.ENSRNOP00000003797"/>
<dbReference type="GlyGen" id="O55006">
    <property type="glycosylation" value="2 sites"/>
</dbReference>
<dbReference type="PaxDb" id="10116-ENSRNOP00000003797"/>
<dbReference type="Ensembl" id="ENSRNOT00000003797.5">
    <property type="protein sequence ID" value="ENSRNOP00000003797.2"/>
    <property type="gene ID" value="ENSRNOG00000002820.5"/>
</dbReference>
<dbReference type="GeneID" id="24906"/>
<dbReference type="KEGG" id="rno:24906"/>
<dbReference type="AGR" id="RGD:3683"/>
<dbReference type="CTD" id="24906"/>
<dbReference type="RGD" id="3683">
    <property type="gene designation" value="LOC24906"/>
</dbReference>
<dbReference type="eggNOG" id="ENOG502SDSC">
    <property type="taxonomic scope" value="Eukaryota"/>
</dbReference>
<dbReference type="GeneTree" id="ENSGT00730000111648"/>
<dbReference type="InParanoid" id="O55006"/>
<dbReference type="OMA" id="PNGVECP"/>
<dbReference type="OrthoDB" id="9907178at2759"/>
<dbReference type="PhylomeDB" id="O55006"/>
<dbReference type="TreeFam" id="TF339495"/>
<dbReference type="PRO" id="PR:O55006"/>
<dbReference type="Proteomes" id="UP000002494">
    <property type="component" value="Chromosome 10"/>
</dbReference>
<dbReference type="Proteomes" id="UP000234681">
    <property type="component" value="Chromosome 10"/>
</dbReference>
<dbReference type="Bgee" id="ENSRNOG00000002820">
    <property type="expression patterns" value="Expressed in spleen and 16 other cell types or tissues"/>
</dbReference>
<dbReference type="ExpressionAtlas" id="O55006">
    <property type="expression patterns" value="baseline and differential"/>
</dbReference>
<dbReference type="GO" id="GO:0005576">
    <property type="term" value="C:extracellular region"/>
    <property type="evidence" value="ECO:0007669"/>
    <property type="project" value="UniProtKB-SubCell"/>
</dbReference>
<dbReference type="GO" id="GO:0046849">
    <property type="term" value="P:bone remodeling"/>
    <property type="evidence" value="ECO:0000270"/>
    <property type="project" value="UniProtKB"/>
</dbReference>
<dbReference type="CDD" id="cd23572">
    <property type="entry name" value="TFP_LU_ECD_PINLYP_rpt2"/>
    <property type="match status" value="1"/>
</dbReference>
<dbReference type="Gene3D" id="2.10.60.10">
    <property type="entry name" value="CD59"/>
    <property type="match status" value="1"/>
</dbReference>
<dbReference type="InterPro" id="IPR050918">
    <property type="entry name" value="CNF-like_PLA2_Inhibitor"/>
</dbReference>
<dbReference type="InterPro" id="IPR045860">
    <property type="entry name" value="Snake_toxin-like_sf"/>
</dbReference>
<dbReference type="PANTHER" id="PTHR20914:SF8">
    <property type="entry name" value="GENE 12253-RELATED"/>
    <property type="match status" value="1"/>
</dbReference>
<dbReference type="PANTHER" id="PTHR20914">
    <property type="entry name" value="LY6/PLAUR DOMAIN-CONTAINING PROTEIN 8"/>
    <property type="match status" value="1"/>
</dbReference>
<dbReference type="SUPFAM" id="SSF57302">
    <property type="entry name" value="Snake toxin-like"/>
    <property type="match status" value="1"/>
</dbReference>
<sequence length="240" mass="26187">MSWFLVLKCLLTVCIISHLSVSSTESYGCIRKTCFGGRCLHNTTRSCEFSKGCFSQLQEFAVPLLLLNRRVEQRGCSEDNCTELAFSATLGIDWMFSYNHQCCYSEQCNNKPINVSPLSLQPNGVECPTCYSELGTCRPVSLKCTGAQTTCVNVTGQGIREDFIKIHAMGCATQTACNLKNVIILNNIKIDTSCVSGSPPLRYSPSLSTDQKTSSATAPTLCLLAAVLPAIMVMESFSEL</sequence>
<accession>O55006</accession>
<name>ROB1_RAT</name>